<reference key="1">
    <citation type="journal article" date="2012" name="Mol. Biol. Cell">
        <title>Mice expressing aberrant sperm-specific protein PMIS2 produce normal-looking but fertilization-incompetent spermatozoa.</title>
        <authorList>
            <person name="Yamaguchi R."/>
            <person name="Fujihara Y."/>
            <person name="Ikawa M."/>
            <person name="Okabe M."/>
        </authorList>
    </citation>
    <scope>NUCLEOTIDE SEQUENCE [MRNA]</scope>
    <scope>FUNCTION</scope>
    <scope>DISRUPTION PHENOTYPE</scope>
    <scope>TISSUE SPECIFICITY</scope>
    <source>
        <tissue>Testis</tissue>
    </source>
</reference>
<reference key="2">
    <citation type="journal article" date="2005" name="Science">
        <title>The transcriptional landscape of the mammalian genome.</title>
        <authorList>
            <person name="Carninci P."/>
            <person name="Kasukawa T."/>
            <person name="Katayama S."/>
            <person name="Gough J."/>
            <person name="Frith M.C."/>
            <person name="Maeda N."/>
            <person name="Oyama R."/>
            <person name="Ravasi T."/>
            <person name="Lenhard B."/>
            <person name="Wells C."/>
            <person name="Kodzius R."/>
            <person name="Shimokawa K."/>
            <person name="Bajic V.B."/>
            <person name="Brenner S.E."/>
            <person name="Batalov S."/>
            <person name="Forrest A.R."/>
            <person name="Zavolan M."/>
            <person name="Davis M.J."/>
            <person name="Wilming L.G."/>
            <person name="Aidinis V."/>
            <person name="Allen J.E."/>
            <person name="Ambesi-Impiombato A."/>
            <person name="Apweiler R."/>
            <person name="Aturaliya R.N."/>
            <person name="Bailey T.L."/>
            <person name="Bansal M."/>
            <person name="Baxter L."/>
            <person name="Beisel K.W."/>
            <person name="Bersano T."/>
            <person name="Bono H."/>
            <person name="Chalk A.M."/>
            <person name="Chiu K.P."/>
            <person name="Choudhary V."/>
            <person name="Christoffels A."/>
            <person name="Clutterbuck D.R."/>
            <person name="Crowe M.L."/>
            <person name="Dalla E."/>
            <person name="Dalrymple B.P."/>
            <person name="de Bono B."/>
            <person name="Della Gatta G."/>
            <person name="di Bernardo D."/>
            <person name="Down T."/>
            <person name="Engstrom P."/>
            <person name="Fagiolini M."/>
            <person name="Faulkner G."/>
            <person name="Fletcher C.F."/>
            <person name="Fukushima T."/>
            <person name="Furuno M."/>
            <person name="Futaki S."/>
            <person name="Gariboldi M."/>
            <person name="Georgii-Hemming P."/>
            <person name="Gingeras T.R."/>
            <person name="Gojobori T."/>
            <person name="Green R.E."/>
            <person name="Gustincich S."/>
            <person name="Harbers M."/>
            <person name="Hayashi Y."/>
            <person name="Hensch T.K."/>
            <person name="Hirokawa N."/>
            <person name="Hill D."/>
            <person name="Huminiecki L."/>
            <person name="Iacono M."/>
            <person name="Ikeo K."/>
            <person name="Iwama A."/>
            <person name="Ishikawa T."/>
            <person name="Jakt M."/>
            <person name="Kanapin A."/>
            <person name="Katoh M."/>
            <person name="Kawasawa Y."/>
            <person name="Kelso J."/>
            <person name="Kitamura H."/>
            <person name="Kitano H."/>
            <person name="Kollias G."/>
            <person name="Krishnan S.P."/>
            <person name="Kruger A."/>
            <person name="Kummerfeld S.K."/>
            <person name="Kurochkin I.V."/>
            <person name="Lareau L.F."/>
            <person name="Lazarevic D."/>
            <person name="Lipovich L."/>
            <person name="Liu J."/>
            <person name="Liuni S."/>
            <person name="McWilliam S."/>
            <person name="Madan Babu M."/>
            <person name="Madera M."/>
            <person name="Marchionni L."/>
            <person name="Matsuda H."/>
            <person name="Matsuzawa S."/>
            <person name="Miki H."/>
            <person name="Mignone F."/>
            <person name="Miyake S."/>
            <person name="Morris K."/>
            <person name="Mottagui-Tabar S."/>
            <person name="Mulder N."/>
            <person name="Nakano N."/>
            <person name="Nakauchi H."/>
            <person name="Ng P."/>
            <person name="Nilsson R."/>
            <person name="Nishiguchi S."/>
            <person name="Nishikawa S."/>
            <person name="Nori F."/>
            <person name="Ohara O."/>
            <person name="Okazaki Y."/>
            <person name="Orlando V."/>
            <person name="Pang K.C."/>
            <person name="Pavan W.J."/>
            <person name="Pavesi G."/>
            <person name="Pesole G."/>
            <person name="Petrovsky N."/>
            <person name="Piazza S."/>
            <person name="Reed J."/>
            <person name="Reid J.F."/>
            <person name="Ring B.Z."/>
            <person name="Ringwald M."/>
            <person name="Rost B."/>
            <person name="Ruan Y."/>
            <person name="Salzberg S.L."/>
            <person name="Sandelin A."/>
            <person name="Schneider C."/>
            <person name="Schoenbach C."/>
            <person name="Sekiguchi K."/>
            <person name="Semple C.A."/>
            <person name="Seno S."/>
            <person name="Sessa L."/>
            <person name="Sheng Y."/>
            <person name="Shibata Y."/>
            <person name="Shimada H."/>
            <person name="Shimada K."/>
            <person name="Silva D."/>
            <person name="Sinclair B."/>
            <person name="Sperling S."/>
            <person name="Stupka E."/>
            <person name="Sugiura K."/>
            <person name="Sultana R."/>
            <person name="Takenaka Y."/>
            <person name="Taki K."/>
            <person name="Tammoja K."/>
            <person name="Tan S.L."/>
            <person name="Tang S."/>
            <person name="Taylor M.S."/>
            <person name="Tegner J."/>
            <person name="Teichmann S.A."/>
            <person name="Ueda H.R."/>
            <person name="van Nimwegen E."/>
            <person name="Verardo R."/>
            <person name="Wei C.L."/>
            <person name="Yagi K."/>
            <person name="Yamanishi H."/>
            <person name="Zabarovsky E."/>
            <person name="Zhu S."/>
            <person name="Zimmer A."/>
            <person name="Hide W."/>
            <person name="Bult C."/>
            <person name="Grimmond S.M."/>
            <person name="Teasdale R.D."/>
            <person name="Liu E.T."/>
            <person name="Brusic V."/>
            <person name="Quackenbush J."/>
            <person name="Wahlestedt C."/>
            <person name="Mattick J.S."/>
            <person name="Hume D.A."/>
            <person name="Kai C."/>
            <person name="Sasaki D."/>
            <person name="Tomaru Y."/>
            <person name="Fukuda S."/>
            <person name="Kanamori-Katayama M."/>
            <person name="Suzuki M."/>
            <person name="Aoki J."/>
            <person name="Arakawa T."/>
            <person name="Iida J."/>
            <person name="Imamura K."/>
            <person name="Itoh M."/>
            <person name="Kato T."/>
            <person name="Kawaji H."/>
            <person name="Kawagashira N."/>
            <person name="Kawashima T."/>
            <person name="Kojima M."/>
            <person name="Kondo S."/>
            <person name="Konno H."/>
            <person name="Nakano K."/>
            <person name="Ninomiya N."/>
            <person name="Nishio T."/>
            <person name="Okada M."/>
            <person name="Plessy C."/>
            <person name="Shibata K."/>
            <person name="Shiraki T."/>
            <person name="Suzuki S."/>
            <person name="Tagami M."/>
            <person name="Waki K."/>
            <person name="Watahiki A."/>
            <person name="Okamura-Oho Y."/>
            <person name="Suzuki H."/>
            <person name="Kawai J."/>
            <person name="Hayashizaki Y."/>
        </authorList>
    </citation>
    <scope>NUCLEOTIDE SEQUENCE [LARGE SCALE MRNA]</scope>
    <source>
        <strain>C57BL/6J</strain>
        <tissue>Testis</tissue>
    </source>
</reference>
<reference key="3">
    <citation type="journal article" date="2009" name="PLoS Biol.">
        <title>Lineage-specific biology revealed by a finished genome assembly of the mouse.</title>
        <authorList>
            <person name="Church D.M."/>
            <person name="Goodstadt L."/>
            <person name="Hillier L.W."/>
            <person name="Zody M.C."/>
            <person name="Goldstein S."/>
            <person name="She X."/>
            <person name="Bult C.J."/>
            <person name="Agarwala R."/>
            <person name="Cherry J.L."/>
            <person name="DiCuccio M."/>
            <person name="Hlavina W."/>
            <person name="Kapustin Y."/>
            <person name="Meric P."/>
            <person name="Maglott D."/>
            <person name="Birtle Z."/>
            <person name="Marques A.C."/>
            <person name="Graves T."/>
            <person name="Zhou S."/>
            <person name="Teague B."/>
            <person name="Potamousis K."/>
            <person name="Churas C."/>
            <person name="Place M."/>
            <person name="Herschleb J."/>
            <person name="Runnheim R."/>
            <person name="Forrest D."/>
            <person name="Amos-Landgraf J."/>
            <person name="Schwartz D.C."/>
            <person name="Cheng Z."/>
            <person name="Lindblad-Toh K."/>
            <person name="Eichler E.E."/>
            <person name="Ponting C.P."/>
        </authorList>
    </citation>
    <scope>NUCLEOTIDE SEQUENCE [LARGE SCALE GENOMIC DNA]</scope>
    <source>
        <strain>C57BL/6J</strain>
    </source>
</reference>
<reference key="4">
    <citation type="submission" date="2005-09" db="EMBL/GenBank/DDBJ databases">
        <authorList>
            <person name="Mural R.J."/>
            <person name="Adams M.D."/>
            <person name="Myers E.W."/>
            <person name="Smith H.O."/>
            <person name="Venter J.C."/>
        </authorList>
    </citation>
    <scope>NUCLEOTIDE SEQUENCE [LARGE SCALE GENOMIC DNA]</scope>
</reference>
<reference key="5">
    <citation type="journal article" date="2004" name="Genome Res.">
        <title>The status, quality, and expansion of the NIH full-length cDNA project: the Mammalian Gene Collection (MGC).</title>
        <authorList>
            <consortium name="The MGC Project Team"/>
        </authorList>
    </citation>
    <scope>NUCLEOTIDE SEQUENCE [LARGE SCALE MRNA]</scope>
    <source>
        <tissue>Testis</tissue>
    </source>
</reference>
<sequence>MDTDEQGAPGRKPLDRPQTPDELKFYARNYVMLALLAMILFLPFGILAIYFSIQTNEANKCSNWEDAYRNSSRTMWFNMLAIVAFVGIIYILVLVL</sequence>
<comment type="function">
    <text evidence="2">May play a role in spermatozoa mobility.</text>
</comment>
<comment type="subcellular location">
    <subcellularLocation>
        <location evidence="1">Membrane</location>
        <topology evidence="1">Multi-pass membrane protein</topology>
    </subcellularLocation>
</comment>
<comment type="tissue specificity">
    <text evidence="2">Specifically expressed in testis.</text>
</comment>
<comment type="disruption phenotype">
    <text evidence="2">Mice lacking Pmis2 are viable but display male infertility despite a normal mating behavior. The ability of spermatozoa to migrate through the uterotubal junction is impaired. Their binding to the zona pelucida of eggs is also altered.</text>
</comment>
<comment type="similarity">
    <text evidence="4">Belongs to the CD225/Dispanin family.</text>
</comment>
<keyword id="KW-0472">Membrane</keyword>
<keyword id="KW-1185">Reference proteome</keyword>
<keyword id="KW-0812">Transmembrane</keyword>
<keyword id="KW-1133">Transmembrane helix</keyword>
<dbReference type="EMBL" id="AB690425">
    <property type="protein sequence ID" value="BAL43004.1"/>
    <property type="molecule type" value="mRNA"/>
</dbReference>
<dbReference type="EMBL" id="AK015595">
    <property type="protein sequence ID" value="BAC25467.1"/>
    <property type="molecule type" value="mRNA"/>
</dbReference>
<dbReference type="EMBL" id="AC167978">
    <property type="status" value="NOT_ANNOTATED_CDS"/>
    <property type="molecule type" value="Genomic_DNA"/>
</dbReference>
<dbReference type="EMBL" id="CH466593">
    <property type="protein sequence ID" value="EDL23998.1"/>
    <property type="molecule type" value="Genomic_DNA"/>
</dbReference>
<dbReference type="EMBL" id="BC100424">
    <property type="protein sequence ID" value="AAI00425.1"/>
    <property type="molecule type" value="mRNA"/>
</dbReference>
<dbReference type="SMR" id="Q8CES1"/>
<dbReference type="FunCoup" id="Q8CES1">
    <property type="interactions" value="4"/>
</dbReference>
<dbReference type="Antibodypedia" id="82040">
    <property type="antibodies" value="1 antibodies from 1 providers"/>
</dbReference>
<dbReference type="Ensembl" id="ENSMUST00000051495.7">
    <property type="protein sequence ID" value="ENSMUSP00000144806.2"/>
    <property type="gene ID" value="ENSMUSG00000049761.7"/>
</dbReference>
<dbReference type="AGR" id="MGI:1922177"/>
<dbReference type="MGI" id="MGI:1922177">
    <property type="gene designation" value="Pmis2"/>
</dbReference>
<dbReference type="VEuPathDB" id="HostDB:ENSMUSG00000049761"/>
<dbReference type="GeneTree" id="ENSGT00950000183147"/>
<dbReference type="InParanoid" id="Q8CES1"/>
<dbReference type="OMA" id="WEDAYIN"/>
<dbReference type="OrthoDB" id="9808647at2759"/>
<dbReference type="ChiTaRS" id="Pmis2">
    <property type="organism name" value="mouse"/>
</dbReference>
<dbReference type="PRO" id="PR:Q8CES1"/>
<dbReference type="Proteomes" id="UP000000589">
    <property type="component" value="Chromosome 7"/>
</dbReference>
<dbReference type="Bgee" id="ENSMUSG00000049761">
    <property type="expression patterns" value="Expressed in testis and 20 other cell types or tissues"/>
</dbReference>
<dbReference type="GO" id="GO:0016020">
    <property type="term" value="C:membrane"/>
    <property type="evidence" value="ECO:0007669"/>
    <property type="project" value="UniProtKB-SubCell"/>
</dbReference>
<dbReference type="GO" id="GO:0007339">
    <property type="term" value="P:binding of sperm to zona pellucida"/>
    <property type="evidence" value="ECO:0000315"/>
    <property type="project" value="MGI"/>
</dbReference>
<dbReference type="GO" id="GO:0007338">
    <property type="term" value="P:single fertilization"/>
    <property type="evidence" value="ECO:0000316"/>
    <property type="project" value="MGI"/>
</dbReference>
<dbReference type="InterPro" id="IPR007593">
    <property type="entry name" value="CD225/Dispanin_fam"/>
</dbReference>
<dbReference type="PANTHER" id="PTHR14768:SF5">
    <property type="entry name" value="TRANSMEMBRANE PROTEIN PMIS2"/>
    <property type="match status" value="1"/>
</dbReference>
<dbReference type="PANTHER" id="PTHR14768">
    <property type="entry name" value="UPF0338 PROTEIN"/>
    <property type="match status" value="1"/>
</dbReference>
<dbReference type="Pfam" id="PF04505">
    <property type="entry name" value="CD225"/>
    <property type="match status" value="1"/>
</dbReference>
<gene>
    <name evidence="5" type="primary">Pmis2</name>
</gene>
<feature type="chain" id="PRO_0000444535" description="Transmembrane protein PMIS2">
    <location>
        <begin position="1"/>
        <end position="96"/>
    </location>
</feature>
<feature type="transmembrane region" description="Helical" evidence="1">
    <location>
        <begin position="31"/>
        <end position="51"/>
    </location>
</feature>
<feature type="transmembrane region" description="Helical" evidence="1">
    <location>
        <begin position="76"/>
        <end position="96"/>
    </location>
</feature>
<feature type="sequence conflict" description="In Ref. 1; BAL43004 and 2; BAC25467." ref="1 2">
    <original>M</original>
    <variation>L</variation>
    <location>
        <position position="38"/>
    </location>
</feature>
<accession>Q8CES1</accession>
<accession>Q497Q9</accession>
<protein>
    <recommendedName>
        <fullName evidence="4">Transmembrane protein PMIS2</fullName>
    </recommendedName>
    <alternativeName>
        <fullName evidence="3">Protein missing in infertile spermatozoa 2</fullName>
    </alternativeName>
</protein>
<evidence type="ECO:0000255" key="1"/>
<evidence type="ECO:0000269" key="2">
    <source>
    </source>
</evidence>
<evidence type="ECO:0000303" key="3">
    <source>
    </source>
</evidence>
<evidence type="ECO:0000305" key="4"/>
<evidence type="ECO:0000312" key="5">
    <source>
        <dbReference type="MGI" id="MGI:1922177"/>
    </source>
</evidence>
<name>PMIS2_MOUSE</name>
<organism>
    <name type="scientific">Mus musculus</name>
    <name type="common">Mouse</name>
    <dbReference type="NCBI Taxonomy" id="10090"/>
    <lineage>
        <taxon>Eukaryota</taxon>
        <taxon>Metazoa</taxon>
        <taxon>Chordata</taxon>
        <taxon>Craniata</taxon>
        <taxon>Vertebrata</taxon>
        <taxon>Euteleostomi</taxon>
        <taxon>Mammalia</taxon>
        <taxon>Eutheria</taxon>
        <taxon>Euarchontoglires</taxon>
        <taxon>Glires</taxon>
        <taxon>Rodentia</taxon>
        <taxon>Myomorpha</taxon>
        <taxon>Muroidea</taxon>
        <taxon>Muridae</taxon>
        <taxon>Murinae</taxon>
        <taxon>Mus</taxon>
        <taxon>Mus</taxon>
    </lineage>
</organism>
<proteinExistence type="evidence at transcript level"/>